<dbReference type="EC" id="2.1.1.372" evidence="2"/>
<dbReference type="EMBL" id="CR382131">
    <property type="protein sequence ID" value="CAG79838.1"/>
    <property type="molecule type" value="Genomic_DNA"/>
</dbReference>
<dbReference type="RefSeq" id="XP_504243.1">
    <property type="nucleotide sequence ID" value="XM_504243.1"/>
</dbReference>
<dbReference type="SMR" id="Q6C519"/>
<dbReference type="STRING" id="284591.Q6C519"/>
<dbReference type="EnsemblFungi" id="CAG79838">
    <property type="protein sequence ID" value="CAG79838"/>
    <property type="gene ID" value="YALI0_E21802g"/>
</dbReference>
<dbReference type="KEGG" id="yli:2911957"/>
<dbReference type="VEuPathDB" id="FungiDB:YALI0_E21802g"/>
<dbReference type="HOGENOM" id="CLU_330998_0_0_1"/>
<dbReference type="InParanoid" id="Q6C519"/>
<dbReference type="OrthoDB" id="122637at4891"/>
<dbReference type="Proteomes" id="UP000001300">
    <property type="component" value="Chromosome E"/>
</dbReference>
<dbReference type="GO" id="GO:0005694">
    <property type="term" value="C:chromosome"/>
    <property type="evidence" value="ECO:0007669"/>
    <property type="project" value="UniProtKB-SubCell"/>
</dbReference>
<dbReference type="GO" id="GO:0005634">
    <property type="term" value="C:nucleus"/>
    <property type="evidence" value="ECO:0000318"/>
    <property type="project" value="GO_Central"/>
</dbReference>
<dbReference type="GO" id="GO:0042799">
    <property type="term" value="F:histone H4K20 methyltransferase activity"/>
    <property type="evidence" value="ECO:0000318"/>
    <property type="project" value="GO_Central"/>
</dbReference>
<dbReference type="GO" id="GO:0140943">
    <property type="term" value="F:histone H4K20 trimethyltransferase activity"/>
    <property type="evidence" value="ECO:0007669"/>
    <property type="project" value="UniProtKB-EC"/>
</dbReference>
<dbReference type="GO" id="GO:0032259">
    <property type="term" value="P:methylation"/>
    <property type="evidence" value="ECO:0007669"/>
    <property type="project" value="UniProtKB-KW"/>
</dbReference>
<dbReference type="CDD" id="cd10524">
    <property type="entry name" value="SET_Suv4-20-like"/>
    <property type="match status" value="1"/>
</dbReference>
<dbReference type="Gene3D" id="1.10.10.1700">
    <property type="entry name" value="Histone-lysine N-methyltransferase"/>
    <property type="match status" value="1"/>
</dbReference>
<dbReference type="Gene3D" id="2.170.270.10">
    <property type="entry name" value="SET domain"/>
    <property type="match status" value="1"/>
</dbReference>
<dbReference type="InterPro" id="IPR041938">
    <property type="entry name" value="Hist-Lys_N-MTase_N"/>
</dbReference>
<dbReference type="InterPro" id="IPR025783">
    <property type="entry name" value="Set9_fungi"/>
</dbReference>
<dbReference type="InterPro" id="IPR001214">
    <property type="entry name" value="SET_dom"/>
</dbReference>
<dbReference type="InterPro" id="IPR046341">
    <property type="entry name" value="SET_dom_sf"/>
</dbReference>
<dbReference type="InterPro" id="IPR039977">
    <property type="entry name" value="Suv4-20/Set9"/>
</dbReference>
<dbReference type="PANTHER" id="PTHR12977:SF4">
    <property type="entry name" value="HISTONE-LYSINE N-METHYLTRANSFERASE KMT5B"/>
    <property type="match status" value="1"/>
</dbReference>
<dbReference type="PANTHER" id="PTHR12977">
    <property type="entry name" value="SUPPRESSOR OF VARIEGATION 4-20-RELATED"/>
    <property type="match status" value="1"/>
</dbReference>
<dbReference type="Pfam" id="PF00856">
    <property type="entry name" value="SET"/>
    <property type="match status" value="1"/>
</dbReference>
<dbReference type="SUPFAM" id="SSF82199">
    <property type="entry name" value="SET domain"/>
    <property type="match status" value="1"/>
</dbReference>
<dbReference type="PROSITE" id="PS51567">
    <property type="entry name" value="SAM_MT43_SUVAR420_1"/>
    <property type="match status" value="1"/>
</dbReference>
<dbReference type="PROSITE" id="PS50280">
    <property type="entry name" value="SET"/>
    <property type="match status" value="1"/>
</dbReference>
<feature type="chain" id="PRO_0000281808" description="Histone-lysine N-methyltransferase SET9">
    <location>
        <begin position="1"/>
        <end position="866"/>
    </location>
</feature>
<feature type="domain" description="SET" evidence="3">
    <location>
        <begin position="111"/>
        <end position="223"/>
    </location>
</feature>
<feature type="region of interest" description="Disordered" evidence="5">
    <location>
        <begin position="243"/>
        <end position="310"/>
    </location>
</feature>
<feature type="region of interest" description="Disordered" evidence="5">
    <location>
        <begin position="359"/>
        <end position="378"/>
    </location>
</feature>
<feature type="region of interest" description="Disordered" evidence="5">
    <location>
        <begin position="383"/>
        <end position="416"/>
    </location>
</feature>
<feature type="region of interest" description="Disordered" evidence="5">
    <location>
        <begin position="443"/>
        <end position="495"/>
    </location>
</feature>
<feature type="region of interest" description="Disordered" evidence="5">
    <location>
        <begin position="661"/>
        <end position="853"/>
    </location>
</feature>
<feature type="compositionally biased region" description="Acidic residues" evidence="5">
    <location>
        <begin position="253"/>
        <end position="263"/>
    </location>
</feature>
<feature type="compositionally biased region" description="Basic and acidic residues" evidence="5">
    <location>
        <begin position="278"/>
        <end position="302"/>
    </location>
</feature>
<feature type="compositionally biased region" description="Polar residues" evidence="5">
    <location>
        <begin position="359"/>
        <end position="372"/>
    </location>
</feature>
<feature type="compositionally biased region" description="Low complexity" evidence="5">
    <location>
        <begin position="390"/>
        <end position="403"/>
    </location>
</feature>
<feature type="compositionally biased region" description="Basic and acidic residues" evidence="5">
    <location>
        <begin position="457"/>
        <end position="480"/>
    </location>
</feature>
<feature type="compositionally biased region" description="Basic residues" evidence="5">
    <location>
        <begin position="481"/>
        <end position="492"/>
    </location>
</feature>
<feature type="compositionally biased region" description="Basic and acidic residues" evidence="5">
    <location>
        <begin position="696"/>
        <end position="712"/>
    </location>
</feature>
<feature type="compositionally biased region" description="Polar residues" evidence="5">
    <location>
        <begin position="728"/>
        <end position="739"/>
    </location>
</feature>
<feature type="compositionally biased region" description="Basic and acidic residues" evidence="5">
    <location>
        <begin position="751"/>
        <end position="772"/>
    </location>
</feature>
<feature type="compositionally biased region" description="Low complexity" evidence="5">
    <location>
        <begin position="776"/>
        <end position="789"/>
    </location>
</feature>
<feature type="compositionally biased region" description="Basic and acidic residues" evidence="5">
    <location>
        <begin position="797"/>
        <end position="813"/>
    </location>
</feature>
<feature type="compositionally biased region" description="Low complexity" evidence="5">
    <location>
        <begin position="834"/>
        <end position="845"/>
    </location>
</feature>
<reference key="1">
    <citation type="journal article" date="2004" name="Nature">
        <title>Genome evolution in yeasts.</title>
        <authorList>
            <person name="Dujon B."/>
            <person name="Sherman D."/>
            <person name="Fischer G."/>
            <person name="Durrens P."/>
            <person name="Casaregola S."/>
            <person name="Lafontaine I."/>
            <person name="de Montigny J."/>
            <person name="Marck C."/>
            <person name="Neuveglise C."/>
            <person name="Talla E."/>
            <person name="Goffard N."/>
            <person name="Frangeul L."/>
            <person name="Aigle M."/>
            <person name="Anthouard V."/>
            <person name="Babour A."/>
            <person name="Barbe V."/>
            <person name="Barnay S."/>
            <person name="Blanchin S."/>
            <person name="Beckerich J.-M."/>
            <person name="Beyne E."/>
            <person name="Bleykasten C."/>
            <person name="Boisrame A."/>
            <person name="Boyer J."/>
            <person name="Cattolico L."/>
            <person name="Confanioleri F."/>
            <person name="de Daruvar A."/>
            <person name="Despons L."/>
            <person name="Fabre E."/>
            <person name="Fairhead C."/>
            <person name="Ferry-Dumazet H."/>
            <person name="Groppi A."/>
            <person name="Hantraye F."/>
            <person name="Hennequin C."/>
            <person name="Jauniaux N."/>
            <person name="Joyet P."/>
            <person name="Kachouri R."/>
            <person name="Kerrest A."/>
            <person name="Koszul R."/>
            <person name="Lemaire M."/>
            <person name="Lesur I."/>
            <person name="Ma L."/>
            <person name="Muller H."/>
            <person name="Nicaud J.-M."/>
            <person name="Nikolski M."/>
            <person name="Oztas S."/>
            <person name="Ozier-Kalogeropoulos O."/>
            <person name="Pellenz S."/>
            <person name="Potier S."/>
            <person name="Richard G.-F."/>
            <person name="Straub M.-L."/>
            <person name="Suleau A."/>
            <person name="Swennen D."/>
            <person name="Tekaia F."/>
            <person name="Wesolowski-Louvel M."/>
            <person name="Westhof E."/>
            <person name="Wirth B."/>
            <person name="Zeniou-Meyer M."/>
            <person name="Zivanovic Y."/>
            <person name="Bolotin-Fukuhara M."/>
            <person name="Thierry A."/>
            <person name="Bouchier C."/>
            <person name="Caudron B."/>
            <person name="Scarpelli C."/>
            <person name="Gaillardin C."/>
            <person name="Weissenbach J."/>
            <person name="Wincker P."/>
            <person name="Souciet J.-L."/>
        </authorList>
    </citation>
    <scope>NUCLEOTIDE SEQUENCE [LARGE SCALE GENOMIC DNA]</scope>
    <source>
        <strain>CLIB 122 / E 150</strain>
    </source>
</reference>
<sequence length="866" mass="96798">MITVTPGELATIDDALTDLLLERVFYWAEVRKASVHYKPLRGISDRHIHDLVRSIAACETGAAANLAVKKATNAFLELKEVRGYRGRLSPLAYEEFQRHTVRYLTIYKASCGFEINVSMRYKCRSNRGESCVISRVRYNRGDEIVGLSGCLAKMTKDEELALANDFSVLHSSRRGGNCLMLGPARFVNHDCSANARFVPVPSGMVIQAVKPINVGDEITVKYAENYFGRRNKECLCQTCEENSRGLYGSPQESSEEESDDDMDELTKIELQRRKKRQEQREGGTPELREGGRGSSESSRETSEEAIEISTSKNWPLIPKIESHTADSTPLPVPVGEVSEATVTEVSTVVPAQEAIPVNESTTALSQSSNEFQDPTIDPILNGASAEIRFPSLPSPDTTTSPESQVPPFIQPKSARRNHHYLGMHNTDERVRFNDRLSVLDERGGSEDMESCLVSGSESRDDSTAMSRDEESSRDDGDGSRSKRSKRHVRAQRKNSGSWSFSQEDLSFDRLCKAAREQAYDPSRYALTGVYGFSVSGATQTCVSCCSVYNLTDGPKTLGHFCPRCHRHAAIHSFAWPYTNHKHALPLCLLMMRPPKKLEDEDWGLSKPQVAQQFGAKNRKIFEEDGSLVQKKRKSLAWSWEYTKEEPAQEITSMRIEDMSPKELKKWSQAGRQTRSGRVSMLPEKPKRSRKSAPEPVEMRDNVAQLSREERAWKRARRGTVGHEKVEVNTPTVETPSTGTPKVKKLHWKQKLAMERRQKEAEAAEVAETRVADGVDASTPSPAGSTPTPRGRGRPRKSSREEEIPPEKTPEAKRPSPAATKTPSMSPKVKKEPLSMSFSMSPTSRSGRVRNPTEKALQLMEQGEYVI</sequence>
<name>SET9_YARLI</name>
<protein>
    <recommendedName>
        <fullName>Histone-lysine N-methyltransferase SET9</fullName>
        <ecNumber evidence="2">2.1.1.372</ecNumber>
    </recommendedName>
    <alternativeName>
        <fullName>SET domain protein 9</fullName>
    </alternativeName>
</protein>
<keyword id="KW-0156">Chromatin regulator</keyword>
<keyword id="KW-0158">Chromosome</keyword>
<keyword id="KW-0489">Methyltransferase</keyword>
<keyword id="KW-0539">Nucleus</keyword>
<keyword id="KW-1185">Reference proteome</keyword>
<keyword id="KW-0949">S-adenosyl-L-methionine</keyword>
<keyword id="KW-0808">Transferase</keyword>
<organism>
    <name type="scientific">Yarrowia lipolytica (strain CLIB 122 / E 150)</name>
    <name type="common">Yeast</name>
    <name type="synonym">Candida lipolytica</name>
    <dbReference type="NCBI Taxonomy" id="284591"/>
    <lineage>
        <taxon>Eukaryota</taxon>
        <taxon>Fungi</taxon>
        <taxon>Dikarya</taxon>
        <taxon>Ascomycota</taxon>
        <taxon>Saccharomycotina</taxon>
        <taxon>Dipodascomycetes</taxon>
        <taxon>Dipodascales</taxon>
        <taxon>Dipodascales incertae sedis</taxon>
        <taxon>Yarrowia</taxon>
    </lineage>
</organism>
<gene>
    <name type="primary">SET9</name>
    <name type="ordered locus">YALI0E21802g</name>
</gene>
<comment type="function">
    <text evidence="2">Histone methyltransferase that trimethylates 'Lys-20' of histone H4 to form H4K20me3.</text>
</comment>
<comment type="catalytic activity">
    <reaction evidence="2 4">
        <text>L-lysyl(20)-[histone H4] + 3 S-adenosyl-L-methionine = N(6),N(6),N(6)-trimethyl-L-lysyl(20)-[histone H4] + 3 S-adenosyl-L-homocysteine + 3 H(+)</text>
        <dbReference type="Rhea" id="RHEA:64456"/>
        <dbReference type="Rhea" id="RHEA-COMP:15554"/>
        <dbReference type="Rhea" id="RHEA-COMP:15998"/>
        <dbReference type="ChEBI" id="CHEBI:15378"/>
        <dbReference type="ChEBI" id="CHEBI:29969"/>
        <dbReference type="ChEBI" id="CHEBI:57856"/>
        <dbReference type="ChEBI" id="CHEBI:59789"/>
        <dbReference type="ChEBI" id="CHEBI:61961"/>
        <dbReference type="EC" id="2.1.1.372"/>
    </reaction>
</comment>
<comment type="subcellular location">
    <subcellularLocation>
        <location evidence="1">Nucleus</location>
    </subcellularLocation>
    <subcellularLocation>
        <location evidence="1">Chromosome</location>
    </subcellularLocation>
</comment>
<comment type="similarity">
    <text evidence="4">Belongs to the class V-like SAM-binding methyltransferase superfamily. Histone-lysine methyltransferase family. Suvar4-20 subfamily.</text>
</comment>
<evidence type="ECO:0000250" key="1"/>
<evidence type="ECO:0000250" key="2">
    <source>
        <dbReference type="UniProtKB" id="Q9USK2"/>
    </source>
</evidence>
<evidence type="ECO:0000255" key="3">
    <source>
        <dbReference type="PROSITE-ProRule" id="PRU00190"/>
    </source>
</evidence>
<evidence type="ECO:0000255" key="4">
    <source>
        <dbReference type="PROSITE-ProRule" id="PRU00900"/>
    </source>
</evidence>
<evidence type="ECO:0000256" key="5">
    <source>
        <dbReference type="SAM" id="MobiDB-lite"/>
    </source>
</evidence>
<proteinExistence type="inferred from homology"/>
<accession>Q6C519</accession>